<comment type="function">
    <text evidence="1">Binds together with bS18 to 16S ribosomal RNA.</text>
</comment>
<comment type="similarity">
    <text evidence="1">Belongs to the bacterial ribosomal protein bS6 family.</text>
</comment>
<evidence type="ECO:0000255" key="1">
    <source>
        <dbReference type="HAMAP-Rule" id="MF_00360"/>
    </source>
</evidence>
<evidence type="ECO:0000305" key="2"/>
<keyword id="KW-0687">Ribonucleoprotein</keyword>
<keyword id="KW-0689">Ribosomal protein</keyword>
<keyword id="KW-0694">RNA-binding</keyword>
<keyword id="KW-0699">rRNA-binding</keyword>
<reference key="1">
    <citation type="journal article" date="2011" name="MBio">
        <title>Novel metabolic attributes of the genus Cyanothece, comprising a group of unicellular nitrogen-fixing Cyanobacteria.</title>
        <authorList>
            <person name="Bandyopadhyay A."/>
            <person name="Elvitigala T."/>
            <person name="Welsh E."/>
            <person name="Stockel J."/>
            <person name="Liberton M."/>
            <person name="Min H."/>
            <person name="Sherman L.A."/>
            <person name="Pakrasi H.B."/>
        </authorList>
    </citation>
    <scope>NUCLEOTIDE SEQUENCE [LARGE SCALE GENOMIC DNA]</scope>
    <source>
        <strain>PCC 7425 / ATCC 29141</strain>
    </source>
</reference>
<name>RS6_CYAP4</name>
<organism>
    <name type="scientific">Cyanothece sp. (strain PCC 7425 / ATCC 29141)</name>
    <dbReference type="NCBI Taxonomy" id="395961"/>
    <lineage>
        <taxon>Bacteria</taxon>
        <taxon>Bacillati</taxon>
        <taxon>Cyanobacteriota</taxon>
        <taxon>Cyanophyceae</taxon>
        <taxon>Gomontiellales</taxon>
        <taxon>Cyanothecaceae</taxon>
        <taxon>Cyanothece</taxon>
    </lineage>
</organism>
<feature type="chain" id="PRO_1000133523" description="Small ribosomal subunit protein bS6">
    <location>
        <begin position="1"/>
        <end position="106"/>
    </location>
</feature>
<dbReference type="EMBL" id="CP001344">
    <property type="protein sequence ID" value="ACL44051.1"/>
    <property type="molecule type" value="Genomic_DNA"/>
</dbReference>
<dbReference type="SMR" id="B8HR63"/>
<dbReference type="STRING" id="395961.Cyan7425_1682"/>
<dbReference type="KEGG" id="cyn:Cyan7425_1682"/>
<dbReference type="eggNOG" id="COG0360">
    <property type="taxonomic scope" value="Bacteria"/>
</dbReference>
<dbReference type="HOGENOM" id="CLU_113441_5_2_3"/>
<dbReference type="GO" id="GO:0005737">
    <property type="term" value="C:cytoplasm"/>
    <property type="evidence" value="ECO:0007669"/>
    <property type="project" value="UniProtKB-ARBA"/>
</dbReference>
<dbReference type="GO" id="GO:1990904">
    <property type="term" value="C:ribonucleoprotein complex"/>
    <property type="evidence" value="ECO:0007669"/>
    <property type="project" value="UniProtKB-KW"/>
</dbReference>
<dbReference type="GO" id="GO:0005840">
    <property type="term" value="C:ribosome"/>
    <property type="evidence" value="ECO:0007669"/>
    <property type="project" value="UniProtKB-KW"/>
</dbReference>
<dbReference type="GO" id="GO:0070181">
    <property type="term" value="F:small ribosomal subunit rRNA binding"/>
    <property type="evidence" value="ECO:0007669"/>
    <property type="project" value="TreeGrafter"/>
</dbReference>
<dbReference type="GO" id="GO:0003735">
    <property type="term" value="F:structural constituent of ribosome"/>
    <property type="evidence" value="ECO:0007669"/>
    <property type="project" value="InterPro"/>
</dbReference>
<dbReference type="GO" id="GO:0006412">
    <property type="term" value="P:translation"/>
    <property type="evidence" value="ECO:0007669"/>
    <property type="project" value="UniProtKB-UniRule"/>
</dbReference>
<dbReference type="CDD" id="cd15487">
    <property type="entry name" value="bS6_chloro_cyano"/>
    <property type="match status" value="1"/>
</dbReference>
<dbReference type="Gene3D" id="3.30.70.60">
    <property type="match status" value="1"/>
</dbReference>
<dbReference type="HAMAP" id="MF_00360">
    <property type="entry name" value="Ribosomal_bS6"/>
    <property type="match status" value="1"/>
</dbReference>
<dbReference type="InterPro" id="IPR000529">
    <property type="entry name" value="Ribosomal_bS6"/>
</dbReference>
<dbReference type="InterPro" id="IPR020815">
    <property type="entry name" value="Ribosomal_bS6_CS"/>
</dbReference>
<dbReference type="InterPro" id="IPR035980">
    <property type="entry name" value="Ribosomal_bS6_sf"/>
</dbReference>
<dbReference type="InterPro" id="IPR020814">
    <property type="entry name" value="Ribosomal_S6_plastid/chlpt"/>
</dbReference>
<dbReference type="InterPro" id="IPR014717">
    <property type="entry name" value="Transl_elong_EF1B/ribsomal_bS6"/>
</dbReference>
<dbReference type="NCBIfam" id="TIGR00166">
    <property type="entry name" value="S6"/>
    <property type="match status" value="1"/>
</dbReference>
<dbReference type="PANTHER" id="PTHR21011">
    <property type="entry name" value="MITOCHONDRIAL 28S RIBOSOMAL PROTEIN S6"/>
    <property type="match status" value="1"/>
</dbReference>
<dbReference type="PANTHER" id="PTHR21011:SF1">
    <property type="entry name" value="SMALL RIBOSOMAL SUBUNIT PROTEIN BS6M"/>
    <property type="match status" value="1"/>
</dbReference>
<dbReference type="Pfam" id="PF01250">
    <property type="entry name" value="Ribosomal_S6"/>
    <property type="match status" value="1"/>
</dbReference>
<dbReference type="SUPFAM" id="SSF54995">
    <property type="entry name" value="Ribosomal protein S6"/>
    <property type="match status" value="1"/>
</dbReference>
<dbReference type="PROSITE" id="PS01048">
    <property type="entry name" value="RIBOSOMAL_S6"/>
    <property type="match status" value="1"/>
</dbReference>
<accession>B8HR63</accession>
<protein>
    <recommendedName>
        <fullName evidence="1">Small ribosomal subunit protein bS6</fullName>
    </recommendedName>
    <alternativeName>
        <fullName evidence="2">30S ribosomal protein S6</fullName>
    </alternativeName>
</protein>
<sequence length="106" mass="12328">MTQLYETMYIIRPDLGEETVDQVINQYQSLLRDQGAEDVQTQHRGKRRLAYEIRKFREGIYVQMNYKAAGPLVANLQRAMRLSDEVIRYLTICQDEPDTDVEAATA</sequence>
<gene>
    <name evidence="1" type="primary">rpsF</name>
    <name evidence="1" type="synonym">rps6</name>
    <name type="ordered locus">Cyan7425_1682</name>
</gene>
<proteinExistence type="inferred from homology"/>